<feature type="chain" id="PRO_0000301884" description="3-hydroxyacyl-[acyl-carrier-protein] dehydratase FabZ">
    <location>
        <begin position="1"/>
        <end position="155"/>
    </location>
</feature>
<feature type="active site" evidence="1">
    <location>
        <position position="54"/>
    </location>
</feature>
<reference key="1">
    <citation type="journal article" date="2010" name="Genome Biol. Evol.">
        <title>Continuing evolution of Burkholderia mallei through genome reduction and large-scale rearrangements.</title>
        <authorList>
            <person name="Losada L."/>
            <person name="Ronning C.M."/>
            <person name="DeShazer D."/>
            <person name="Woods D."/>
            <person name="Fedorova N."/>
            <person name="Kim H.S."/>
            <person name="Shabalina S.A."/>
            <person name="Pearson T.R."/>
            <person name="Brinkac L."/>
            <person name="Tan P."/>
            <person name="Nandi T."/>
            <person name="Crabtree J."/>
            <person name="Badger J."/>
            <person name="Beckstrom-Sternberg S."/>
            <person name="Saqib M."/>
            <person name="Schutzer S.E."/>
            <person name="Keim P."/>
            <person name="Nierman W.C."/>
        </authorList>
    </citation>
    <scope>NUCLEOTIDE SEQUENCE [LARGE SCALE GENOMIC DNA]</scope>
    <source>
        <strain>1106a</strain>
    </source>
</reference>
<evidence type="ECO:0000255" key="1">
    <source>
        <dbReference type="HAMAP-Rule" id="MF_00406"/>
    </source>
</evidence>
<organism>
    <name type="scientific">Burkholderia pseudomallei (strain 1106a)</name>
    <dbReference type="NCBI Taxonomy" id="357348"/>
    <lineage>
        <taxon>Bacteria</taxon>
        <taxon>Pseudomonadati</taxon>
        <taxon>Pseudomonadota</taxon>
        <taxon>Betaproteobacteria</taxon>
        <taxon>Burkholderiales</taxon>
        <taxon>Burkholderiaceae</taxon>
        <taxon>Burkholderia</taxon>
        <taxon>pseudomallei group</taxon>
    </lineage>
</organism>
<sequence length="155" mass="17412">MSTEKINFDIHKILTLLPHRYPILLVDRVLELEPHKAIKALKNVTVNEPFFTGHFPKRPVMPGVLIIEALAQAAALLTFAEAQPKDPENTLYYFVGIDNARFKRVVEPGDQLILNVTFERYIRGIWKFKAVAEVDGKVAAEAELMCTVKTADAAP</sequence>
<gene>
    <name evidence="1" type="primary">fabZ</name>
    <name type="ordered locus">BURPS1106A_2481</name>
</gene>
<keyword id="KW-0963">Cytoplasm</keyword>
<keyword id="KW-0441">Lipid A biosynthesis</keyword>
<keyword id="KW-0444">Lipid biosynthesis</keyword>
<keyword id="KW-0443">Lipid metabolism</keyword>
<keyword id="KW-0456">Lyase</keyword>
<proteinExistence type="inferred from homology"/>
<comment type="function">
    <text evidence="1">Involved in unsaturated fatty acids biosynthesis. Catalyzes the dehydration of short chain beta-hydroxyacyl-ACPs and long chain saturated and unsaturated beta-hydroxyacyl-ACPs.</text>
</comment>
<comment type="catalytic activity">
    <reaction evidence="1">
        <text>a (3R)-hydroxyacyl-[ACP] = a (2E)-enoyl-[ACP] + H2O</text>
        <dbReference type="Rhea" id="RHEA:13097"/>
        <dbReference type="Rhea" id="RHEA-COMP:9925"/>
        <dbReference type="Rhea" id="RHEA-COMP:9945"/>
        <dbReference type="ChEBI" id="CHEBI:15377"/>
        <dbReference type="ChEBI" id="CHEBI:78784"/>
        <dbReference type="ChEBI" id="CHEBI:78827"/>
        <dbReference type="EC" id="4.2.1.59"/>
    </reaction>
</comment>
<comment type="subcellular location">
    <subcellularLocation>
        <location evidence="1">Cytoplasm</location>
    </subcellularLocation>
</comment>
<comment type="similarity">
    <text evidence="1">Belongs to the thioester dehydratase family. FabZ subfamily.</text>
</comment>
<name>FABZ_BURP0</name>
<accession>A3NWL9</accession>
<dbReference type="EC" id="4.2.1.59" evidence="1"/>
<dbReference type="EMBL" id="CP000572">
    <property type="protein sequence ID" value="ABN91351.1"/>
    <property type="molecule type" value="Genomic_DNA"/>
</dbReference>
<dbReference type="RefSeq" id="WP_004192266.1">
    <property type="nucleotide sequence ID" value="NC_009076.1"/>
</dbReference>
<dbReference type="SMR" id="A3NWL9"/>
<dbReference type="GeneID" id="93060689"/>
<dbReference type="KEGG" id="bpl:BURPS1106A_2481"/>
<dbReference type="HOGENOM" id="CLU_078912_1_0_4"/>
<dbReference type="Proteomes" id="UP000006738">
    <property type="component" value="Chromosome I"/>
</dbReference>
<dbReference type="GO" id="GO:0005737">
    <property type="term" value="C:cytoplasm"/>
    <property type="evidence" value="ECO:0007669"/>
    <property type="project" value="UniProtKB-SubCell"/>
</dbReference>
<dbReference type="GO" id="GO:0016020">
    <property type="term" value="C:membrane"/>
    <property type="evidence" value="ECO:0007669"/>
    <property type="project" value="GOC"/>
</dbReference>
<dbReference type="GO" id="GO:0019171">
    <property type="term" value="F:(3R)-hydroxyacyl-[acyl-carrier-protein] dehydratase activity"/>
    <property type="evidence" value="ECO:0007669"/>
    <property type="project" value="UniProtKB-EC"/>
</dbReference>
<dbReference type="GO" id="GO:0006633">
    <property type="term" value="P:fatty acid biosynthetic process"/>
    <property type="evidence" value="ECO:0007669"/>
    <property type="project" value="UniProtKB-UniRule"/>
</dbReference>
<dbReference type="GO" id="GO:0009245">
    <property type="term" value="P:lipid A biosynthetic process"/>
    <property type="evidence" value="ECO:0007669"/>
    <property type="project" value="UniProtKB-UniRule"/>
</dbReference>
<dbReference type="CDD" id="cd01288">
    <property type="entry name" value="FabZ"/>
    <property type="match status" value="1"/>
</dbReference>
<dbReference type="FunFam" id="3.10.129.10:FF:000001">
    <property type="entry name" value="3-hydroxyacyl-[acyl-carrier-protein] dehydratase FabZ"/>
    <property type="match status" value="1"/>
</dbReference>
<dbReference type="Gene3D" id="3.10.129.10">
    <property type="entry name" value="Hotdog Thioesterase"/>
    <property type="match status" value="1"/>
</dbReference>
<dbReference type="HAMAP" id="MF_00406">
    <property type="entry name" value="FabZ"/>
    <property type="match status" value="1"/>
</dbReference>
<dbReference type="InterPro" id="IPR013114">
    <property type="entry name" value="FabA_FabZ"/>
</dbReference>
<dbReference type="InterPro" id="IPR010084">
    <property type="entry name" value="FabZ"/>
</dbReference>
<dbReference type="InterPro" id="IPR029069">
    <property type="entry name" value="HotDog_dom_sf"/>
</dbReference>
<dbReference type="NCBIfam" id="TIGR01750">
    <property type="entry name" value="fabZ"/>
    <property type="match status" value="1"/>
</dbReference>
<dbReference type="NCBIfam" id="NF000582">
    <property type="entry name" value="PRK00006.1"/>
    <property type="match status" value="1"/>
</dbReference>
<dbReference type="PANTHER" id="PTHR30272">
    <property type="entry name" value="3-HYDROXYACYL-[ACYL-CARRIER-PROTEIN] DEHYDRATASE"/>
    <property type="match status" value="1"/>
</dbReference>
<dbReference type="PANTHER" id="PTHR30272:SF1">
    <property type="entry name" value="3-HYDROXYACYL-[ACYL-CARRIER-PROTEIN] DEHYDRATASE"/>
    <property type="match status" value="1"/>
</dbReference>
<dbReference type="Pfam" id="PF07977">
    <property type="entry name" value="FabA"/>
    <property type="match status" value="1"/>
</dbReference>
<dbReference type="SUPFAM" id="SSF54637">
    <property type="entry name" value="Thioesterase/thiol ester dehydrase-isomerase"/>
    <property type="match status" value="1"/>
</dbReference>
<protein>
    <recommendedName>
        <fullName evidence="1">3-hydroxyacyl-[acyl-carrier-protein] dehydratase FabZ</fullName>
        <ecNumber evidence="1">4.2.1.59</ecNumber>
    </recommendedName>
    <alternativeName>
        <fullName evidence="1">(3R)-hydroxymyristoyl-[acyl-carrier-protein] dehydratase</fullName>
        <shortName evidence="1">(3R)-hydroxymyristoyl-ACP dehydrase</shortName>
    </alternativeName>
    <alternativeName>
        <fullName evidence="1">Beta-hydroxyacyl-ACP dehydratase</fullName>
    </alternativeName>
</protein>